<accession>Q91YR1</accession>
<accession>O09132</accession>
<accession>Q52L77</accession>
<accession>Q80X09</accession>
<keyword id="KW-0002">3D-structure</keyword>
<keyword id="KW-0007">Acetylation</keyword>
<keyword id="KW-0009">Actin-binding</keyword>
<keyword id="KW-0963">Cytoplasm</keyword>
<keyword id="KW-0206">Cytoskeleton</keyword>
<keyword id="KW-0597">Phosphoprotein</keyword>
<keyword id="KW-1185">Reference proteome</keyword>
<keyword id="KW-0677">Repeat</keyword>
<gene>
    <name type="primary">Twf1</name>
    <name type="synonym">Ptk9</name>
</gene>
<reference evidence="11" key="1">
    <citation type="journal article" date="1997" name="Gene">
        <title>Cloning and characterization of the mouse homolog of the human A6 gene.</title>
        <authorList>
            <person name="Beeler J.F."/>
            <person name="Patel B.K.R."/>
            <person name="Chedid M."/>
            <person name="LaRochelle W.J."/>
        </authorList>
    </citation>
    <scope>NUCLEOTIDE SEQUENCE [MRNA]</scope>
    <scope>FUNCTION</scope>
    <scope>TISSUE SPECIFICITY</scope>
</reference>
<reference key="2">
    <citation type="journal article" date="2003" name="J. Biol. Chem.">
        <title>Mammals have two twinfilin isoforms whose subcellular localizations and tissue distributions are differentially regulated.</title>
        <authorList>
            <person name="Vartiainen M.K."/>
            <person name="Sarkkinen E.M."/>
            <person name="Matilainen T."/>
            <person name="Salminen M."/>
            <person name="Lappalainen P."/>
        </authorList>
    </citation>
    <scope>NUCLEOTIDE SEQUENCE [MRNA]</scope>
    <scope>TISSUE SPECIFICITY</scope>
    <scope>INTERACTION WITH TWF2 AND PHOSPHOINOSITIDE</scope>
    <scope>DEVELOPMENTAL STAGE</scope>
</reference>
<reference key="3">
    <citation type="journal article" date="2005" name="Science">
        <title>The transcriptional landscape of the mammalian genome.</title>
        <authorList>
            <person name="Carninci P."/>
            <person name="Kasukawa T."/>
            <person name="Katayama S."/>
            <person name="Gough J."/>
            <person name="Frith M.C."/>
            <person name="Maeda N."/>
            <person name="Oyama R."/>
            <person name="Ravasi T."/>
            <person name="Lenhard B."/>
            <person name="Wells C."/>
            <person name="Kodzius R."/>
            <person name="Shimokawa K."/>
            <person name="Bajic V.B."/>
            <person name="Brenner S.E."/>
            <person name="Batalov S."/>
            <person name="Forrest A.R."/>
            <person name="Zavolan M."/>
            <person name="Davis M.J."/>
            <person name="Wilming L.G."/>
            <person name="Aidinis V."/>
            <person name="Allen J.E."/>
            <person name="Ambesi-Impiombato A."/>
            <person name="Apweiler R."/>
            <person name="Aturaliya R.N."/>
            <person name="Bailey T.L."/>
            <person name="Bansal M."/>
            <person name="Baxter L."/>
            <person name="Beisel K.W."/>
            <person name="Bersano T."/>
            <person name="Bono H."/>
            <person name="Chalk A.M."/>
            <person name="Chiu K.P."/>
            <person name="Choudhary V."/>
            <person name="Christoffels A."/>
            <person name="Clutterbuck D.R."/>
            <person name="Crowe M.L."/>
            <person name="Dalla E."/>
            <person name="Dalrymple B.P."/>
            <person name="de Bono B."/>
            <person name="Della Gatta G."/>
            <person name="di Bernardo D."/>
            <person name="Down T."/>
            <person name="Engstrom P."/>
            <person name="Fagiolini M."/>
            <person name="Faulkner G."/>
            <person name="Fletcher C.F."/>
            <person name="Fukushima T."/>
            <person name="Furuno M."/>
            <person name="Futaki S."/>
            <person name="Gariboldi M."/>
            <person name="Georgii-Hemming P."/>
            <person name="Gingeras T.R."/>
            <person name="Gojobori T."/>
            <person name="Green R.E."/>
            <person name="Gustincich S."/>
            <person name="Harbers M."/>
            <person name="Hayashi Y."/>
            <person name="Hensch T.K."/>
            <person name="Hirokawa N."/>
            <person name="Hill D."/>
            <person name="Huminiecki L."/>
            <person name="Iacono M."/>
            <person name="Ikeo K."/>
            <person name="Iwama A."/>
            <person name="Ishikawa T."/>
            <person name="Jakt M."/>
            <person name="Kanapin A."/>
            <person name="Katoh M."/>
            <person name="Kawasawa Y."/>
            <person name="Kelso J."/>
            <person name="Kitamura H."/>
            <person name="Kitano H."/>
            <person name="Kollias G."/>
            <person name="Krishnan S.P."/>
            <person name="Kruger A."/>
            <person name="Kummerfeld S.K."/>
            <person name="Kurochkin I.V."/>
            <person name="Lareau L.F."/>
            <person name="Lazarevic D."/>
            <person name="Lipovich L."/>
            <person name="Liu J."/>
            <person name="Liuni S."/>
            <person name="McWilliam S."/>
            <person name="Madan Babu M."/>
            <person name="Madera M."/>
            <person name="Marchionni L."/>
            <person name="Matsuda H."/>
            <person name="Matsuzawa S."/>
            <person name="Miki H."/>
            <person name="Mignone F."/>
            <person name="Miyake S."/>
            <person name="Morris K."/>
            <person name="Mottagui-Tabar S."/>
            <person name="Mulder N."/>
            <person name="Nakano N."/>
            <person name="Nakauchi H."/>
            <person name="Ng P."/>
            <person name="Nilsson R."/>
            <person name="Nishiguchi S."/>
            <person name="Nishikawa S."/>
            <person name="Nori F."/>
            <person name="Ohara O."/>
            <person name="Okazaki Y."/>
            <person name="Orlando V."/>
            <person name="Pang K.C."/>
            <person name="Pavan W.J."/>
            <person name="Pavesi G."/>
            <person name="Pesole G."/>
            <person name="Petrovsky N."/>
            <person name="Piazza S."/>
            <person name="Reed J."/>
            <person name="Reid J.F."/>
            <person name="Ring B.Z."/>
            <person name="Ringwald M."/>
            <person name="Rost B."/>
            <person name="Ruan Y."/>
            <person name="Salzberg S.L."/>
            <person name="Sandelin A."/>
            <person name="Schneider C."/>
            <person name="Schoenbach C."/>
            <person name="Sekiguchi K."/>
            <person name="Semple C.A."/>
            <person name="Seno S."/>
            <person name="Sessa L."/>
            <person name="Sheng Y."/>
            <person name="Shibata Y."/>
            <person name="Shimada H."/>
            <person name="Shimada K."/>
            <person name="Silva D."/>
            <person name="Sinclair B."/>
            <person name="Sperling S."/>
            <person name="Stupka E."/>
            <person name="Sugiura K."/>
            <person name="Sultana R."/>
            <person name="Takenaka Y."/>
            <person name="Taki K."/>
            <person name="Tammoja K."/>
            <person name="Tan S.L."/>
            <person name="Tang S."/>
            <person name="Taylor M.S."/>
            <person name="Tegner J."/>
            <person name="Teichmann S.A."/>
            <person name="Ueda H.R."/>
            <person name="van Nimwegen E."/>
            <person name="Verardo R."/>
            <person name="Wei C.L."/>
            <person name="Yagi K."/>
            <person name="Yamanishi H."/>
            <person name="Zabarovsky E."/>
            <person name="Zhu S."/>
            <person name="Zimmer A."/>
            <person name="Hide W."/>
            <person name="Bult C."/>
            <person name="Grimmond S.M."/>
            <person name="Teasdale R.D."/>
            <person name="Liu E.T."/>
            <person name="Brusic V."/>
            <person name="Quackenbush J."/>
            <person name="Wahlestedt C."/>
            <person name="Mattick J.S."/>
            <person name="Hume D.A."/>
            <person name="Kai C."/>
            <person name="Sasaki D."/>
            <person name="Tomaru Y."/>
            <person name="Fukuda S."/>
            <person name="Kanamori-Katayama M."/>
            <person name="Suzuki M."/>
            <person name="Aoki J."/>
            <person name="Arakawa T."/>
            <person name="Iida J."/>
            <person name="Imamura K."/>
            <person name="Itoh M."/>
            <person name="Kato T."/>
            <person name="Kawaji H."/>
            <person name="Kawagashira N."/>
            <person name="Kawashima T."/>
            <person name="Kojima M."/>
            <person name="Kondo S."/>
            <person name="Konno H."/>
            <person name="Nakano K."/>
            <person name="Ninomiya N."/>
            <person name="Nishio T."/>
            <person name="Okada M."/>
            <person name="Plessy C."/>
            <person name="Shibata K."/>
            <person name="Shiraki T."/>
            <person name="Suzuki S."/>
            <person name="Tagami M."/>
            <person name="Waki K."/>
            <person name="Watahiki A."/>
            <person name="Okamura-Oho Y."/>
            <person name="Suzuki H."/>
            <person name="Kawai J."/>
            <person name="Hayashizaki Y."/>
        </authorList>
    </citation>
    <scope>NUCLEOTIDE SEQUENCE [LARGE SCALE MRNA]</scope>
    <source>
        <strain>C57BL/6J</strain>
        <tissue>Bone marrow</tissue>
    </source>
</reference>
<reference key="4">
    <citation type="journal article" date="2004" name="Genome Res.">
        <title>The status, quality, and expansion of the NIH full-length cDNA project: the Mammalian Gene Collection (MGC).</title>
        <authorList>
            <consortium name="The MGC Project Team"/>
        </authorList>
    </citation>
    <scope>NUCLEOTIDE SEQUENCE [LARGE SCALE MRNA]</scope>
    <scope>VARIANT HIS-51</scope>
    <source>
        <strain>NMRI</strain>
        <tissue>Mammary gland</tissue>
        <tissue>Mammary tumor</tissue>
    </source>
</reference>
<reference evidence="11" key="5">
    <citation type="journal article" date="2000" name="Mol. Cell. Biol.">
        <title>Mouse A6/twinfilin is an actin monomer-binding protein that localizes to the regions of rapid actin dynamics.</title>
        <authorList>
            <person name="Vartiainen M."/>
            <person name="Ojala P.J."/>
            <person name="Auvinen P."/>
            <person name="Peranen J."/>
            <person name="Lappalainen P."/>
        </authorList>
    </citation>
    <scope>FUNCTION</scope>
    <scope>INTERACTION WITH G-ACTIN</scope>
    <scope>SUBCELLULAR LOCATION</scope>
    <scope>TISSUE SPECIFICITY</scope>
</reference>
<reference key="6">
    <citation type="journal article" date="2004" name="EMBO J.">
        <title>Biological role and structural mechanism of twinfilin-capping protein interaction.</title>
        <authorList>
            <person name="Falck S."/>
            <person name="Paavilainen V.O."/>
            <person name="Wear M.A."/>
            <person name="Grossmann J.G."/>
            <person name="Cooper J.A."/>
            <person name="Lappalainen P."/>
        </authorList>
    </citation>
    <scope>FUNCTION</scope>
    <scope>INTERACTION WITH G-ACTIN AND CAPPING PROTEINS</scope>
</reference>
<reference key="7">
    <citation type="journal article" date="2005" name="Nat. Biotechnol.">
        <title>Immunoaffinity profiling of tyrosine phosphorylation in cancer cells.</title>
        <authorList>
            <person name="Rush J."/>
            <person name="Moritz A."/>
            <person name="Lee K.A."/>
            <person name="Guo A."/>
            <person name="Goss V.L."/>
            <person name="Spek E.J."/>
            <person name="Zhang H."/>
            <person name="Zha X.-M."/>
            <person name="Polakiewicz R.D."/>
            <person name="Comb M.J."/>
        </authorList>
    </citation>
    <scope>PHOSPHORYLATION [LARGE SCALE ANALYSIS] AT TYR-309</scope>
    <scope>IDENTIFICATION BY MASS SPECTROMETRY [LARGE SCALE ANALYSIS]</scope>
</reference>
<reference key="8">
    <citation type="journal article" date="2006" name="EMBO J.">
        <title>Mammalian twinfilin sequesters ADP-G-actin and caps filament barbed ends: implications in motility.</title>
        <authorList>
            <person name="Helfer E."/>
            <person name="Nevalainen E.M."/>
            <person name="Naumanen P."/>
            <person name="Romero S."/>
            <person name="Didry D."/>
            <person name="Pantaloni D."/>
            <person name="Lappalainen P."/>
            <person name="Carlier M.-F."/>
        </authorList>
    </citation>
    <scope>FUNCTION</scope>
    <scope>INTERACTION WITH G-ACTIN AND CAPPING PROTEINS</scope>
</reference>
<reference key="9">
    <citation type="journal article" date="2008" name="J. Proteome Res.">
        <title>Large-scale identification and evolution indexing of tyrosine phosphorylation sites from murine brain.</title>
        <authorList>
            <person name="Ballif B.A."/>
            <person name="Carey G.R."/>
            <person name="Sunyaev S.R."/>
            <person name="Gygi S.P."/>
        </authorList>
    </citation>
    <scope>PHOSPHORYLATION [LARGE SCALE ANALYSIS] AT TYR-309</scope>
    <scope>IDENTIFICATION BY MASS SPECTROMETRY [LARGE SCALE ANALYSIS]</scope>
    <source>
        <tissue>Brain</tissue>
    </source>
</reference>
<reference key="10">
    <citation type="journal article" date="2009" name="Mol. Cell. Proteomics">
        <title>Large scale localization of protein phosphorylation by use of electron capture dissociation mass spectrometry.</title>
        <authorList>
            <person name="Sweet S.M."/>
            <person name="Bailey C.M."/>
            <person name="Cunningham D.L."/>
            <person name="Heath J.K."/>
            <person name="Cooper H.J."/>
        </authorList>
    </citation>
    <scope>PHOSPHORYLATION [LARGE SCALE ANALYSIS] AT THR-349</scope>
    <scope>IDENTIFICATION BY MASS SPECTROMETRY [LARGE SCALE ANALYSIS]</scope>
    <source>
        <tissue>Embryonic fibroblast</tissue>
    </source>
</reference>
<reference key="11">
    <citation type="journal article" date="2010" name="Cell">
        <title>A tissue-specific atlas of mouse protein phosphorylation and expression.</title>
        <authorList>
            <person name="Huttlin E.L."/>
            <person name="Jedrychowski M.P."/>
            <person name="Elias J.E."/>
            <person name="Goswami T."/>
            <person name="Rad R."/>
            <person name="Beausoleil S.A."/>
            <person name="Villen J."/>
            <person name="Haas W."/>
            <person name="Sowa M.E."/>
            <person name="Gygi S.P."/>
        </authorList>
    </citation>
    <scope>IDENTIFICATION BY MASS SPECTROMETRY [LARGE SCALE ANALYSIS]</scope>
    <source>
        <tissue>Brain</tissue>
        <tissue>Brown adipose tissue</tissue>
        <tissue>Heart</tissue>
        <tissue>Kidney</tissue>
        <tissue>Liver</tissue>
        <tissue>Lung</tissue>
        <tissue>Pancreas</tissue>
        <tissue>Spleen</tissue>
        <tissue>Testis</tissue>
    </source>
</reference>
<reference key="12">
    <citation type="journal article" date="2002" name="J. Biol. Chem.">
        <title>Structural conservation between the actin monomer-binding sites of twinfilin and actin-depolymerizing factor (ADF)/cofilin.</title>
        <authorList>
            <person name="Paavilainen V.O."/>
            <person name="Merckel M.C."/>
            <person name="Falck S."/>
            <person name="Ojala P.J."/>
            <person name="Pohl E."/>
            <person name="Wilmanns M."/>
            <person name="Lappalainen P."/>
        </authorList>
    </citation>
    <scope>X-RAY CRYSTALLOGRAPHY (1.6 ANGSTROMS) OF 1-142</scope>
</reference>
<reference key="13">
    <citation type="journal article" date="2009" name="Protein Sci.">
        <title>NMR solution structures of actin depolymerizing factor homology domains.</title>
        <authorList>
            <person name="Goroncy A.K."/>
            <person name="Koshiba S."/>
            <person name="Tochio N."/>
            <person name="Tomizawa T."/>
            <person name="Sato M."/>
            <person name="Inoue M."/>
            <person name="Watanabe S."/>
            <person name="Hayashizaki Y."/>
            <person name="Tanaka A."/>
            <person name="Kigawa T."/>
            <person name="Yokoyama S."/>
        </authorList>
    </citation>
    <scope>STRUCTURE BY NMR OF 161-313</scope>
</reference>
<proteinExistence type="evidence at protein level"/>
<evidence type="ECO:0000250" key="1">
    <source>
        <dbReference type="UniProtKB" id="Q12792"/>
    </source>
</evidence>
<evidence type="ECO:0000250" key="2">
    <source>
        <dbReference type="UniProtKB" id="Q5RJR2"/>
    </source>
</evidence>
<evidence type="ECO:0000255" key="3">
    <source>
        <dbReference type="PROSITE-ProRule" id="PRU00599"/>
    </source>
</evidence>
<evidence type="ECO:0000256" key="4">
    <source>
        <dbReference type="SAM" id="MobiDB-lite"/>
    </source>
</evidence>
<evidence type="ECO:0000269" key="5">
    <source>
    </source>
</evidence>
<evidence type="ECO:0000269" key="6">
    <source>
    </source>
</evidence>
<evidence type="ECO:0000269" key="7">
    <source>
    </source>
</evidence>
<evidence type="ECO:0000269" key="8">
    <source>
    </source>
</evidence>
<evidence type="ECO:0000269" key="9">
    <source>
    </source>
</evidence>
<evidence type="ECO:0000269" key="10">
    <source>
    </source>
</evidence>
<evidence type="ECO:0000305" key="11"/>
<evidence type="ECO:0000312" key="12">
    <source>
        <dbReference type="EMBL" id="AAH15081.1"/>
    </source>
</evidence>
<evidence type="ECO:0007744" key="13">
    <source>
    </source>
</evidence>
<evidence type="ECO:0007744" key="14">
    <source>
    </source>
</evidence>
<evidence type="ECO:0007744" key="15">
    <source>
    </source>
</evidence>
<evidence type="ECO:0007829" key="16">
    <source>
        <dbReference type="PDB" id="1M4J"/>
    </source>
</evidence>
<evidence type="ECO:0007829" key="17">
    <source>
        <dbReference type="PDB" id="2D8B"/>
    </source>
</evidence>
<evidence type="ECO:0007829" key="18">
    <source>
        <dbReference type="PDB" id="6RSW"/>
    </source>
</evidence>
<evidence type="ECO:0007829" key="19">
    <source>
        <dbReference type="PDB" id="7DS2"/>
    </source>
</evidence>
<organism evidence="12">
    <name type="scientific">Mus musculus</name>
    <name type="common">Mouse</name>
    <dbReference type="NCBI Taxonomy" id="10090"/>
    <lineage>
        <taxon>Eukaryota</taxon>
        <taxon>Metazoa</taxon>
        <taxon>Chordata</taxon>
        <taxon>Craniata</taxon>
        <taxon>Vertebrata</taxon>
        <taxon>Euteleostomi</taxon>
        <taxon>Mammalia</taxon>
        <taxon>Eutheria</taxon>
        <taxon>Euarchontoglires</taxon>
        <taxon>Glires</taxon>
        <taxon>Rodentia</taxon>
        <taxon>Myomorpha</taxon>
        <taxon>Muroidea</taxon>
        <taxon>Muridae</taxon>
        <taxon>Murinae</taxon>
        <taxon>Mus</taxon>
        <taxon>Mus</taxon>
    </lineage>
</organism>
<protein>
    <recommendedName>
        <fullName>Twinfilin-1</fullName>
    </recommendedName>
    <alternativeName>
        <fullName>Protein A6</fullName>
    </alternativeName>
</protein>
<dbReference type="EMBL" id="U82324">
    <property type="protein sequence ID" value="AAB66592.1"/>
    <property type="molecule type" value="mRNA"/>
</dbReference>
<dbReference type="EMBL" id="AY267188">
    <property type="protein sequence ID" value="AAP31404.1"/>
    <property type="molecule type" value="mRNA"/>
</dbReference>
<dbReference type="EMBL" id="AK147990">
    <property type="protein sequence ID" value="BAE28272.1"/>
    <property type="molecule type" value="mRNA"/>
</dbReference>
<dbReference type="EMBL" id="AK150852">
    <property type="protein sequence ID" value="BAE29908.1"/>
    <property type="molecule type" value="mRNA"/>
</dbReference>
<dbReference type="EMBL" id="BC015081">
    <property type="protein sequence ID" value="AAH15081.1"/>
    <property type="molecule type" value="mRNA"/>
</dbReference>
<dbReference type="EMBL" id="BC094034">
    <property type="protein sequence ID" value="AAH94034.1"/>
    <property type="molecule type" value="mRNA"/>
</dbReference>
<dbReference type="CCDS" id="CCDS27773.1"/>
<dbReference type="RefSeq" id="NP_032997.3">
    <property type="nucleotide sequence ID" value="NM_008971.4"/>
</dbReference>
<dbReference type="PDB" id="1M4J">
    <property type="method" value="X-ray"/>
    <property type="resolution" value="1.60 A"/>
    <property type="chains" value="A/B=1-142"/>
</dbReference>
<dbReference type="PDB" id="2D8B">
    <property type="method" value="NMR"/>
    <property type="chains" value="A=161-313"/>
</dbReference>
<dbReference type="PDB" id="2HD7">
    <property type="method" value="NMR"/>
    <property type="chains" value="A=176-316"/>
</dbReference>
<dbReference type="PDB" id="3DAW">
    <property type="method" value="X-ray"/>
    <property type="resolution" value="2.55 A"/>
    <property type="chains" value="B=167-322"/>
</dbReference>
<dbReference type="PDB" id="6RSW">
    <property type="method" value="X-ray"/>
    <property type="resolution" value="1.95 A"/>
    <property type="chains" value="B=176-316"/>
</dbReference>
<dbReference type="PDB" id="6YP9">
    <property type="method" value="X-ray"/>
    <property type="resolution" value="2.56 A"/>
    <property type="chains" value="B=176-315"/>
</dbReference>
<dbReference type="PDB" id="7DS2">
    <property type="method" value="X-ray"/>
    <property type="resolution" value="1.95 A"/>
    <property type="chains" value="C=315-350"/>
</dbReference>
<dbReference type="PDB" id="7DS4">
    <property type="method" value="X-ray"/>
    <property type="resolution" value="1.85 A"/>
    <property type="chains" value="C=315-344"/>
</dbReference>
<dbReference type="PDB" id="7DS6">
    <property type="method" value="X-ray"/>
    <property type="resolution" value="1.69 A"/>
    <property type="chains" value="C=315-327"/>
</dbReference>
<dbReference type="PDB" id="7DS8">
    <property type="method" value="X-ray"/>
    <property type="resolution" value="1.95 A"/>
    <property type="chains" value="C=328-344"/>
</dbReference>
<dbReference type="PDB" id="7DSB">
    <property type="method" value="X-ray"/>
    <property type="resolution" value="2.44 A"/>
    <property type="chains" value="D=315-344"/>
</dbReference>
<dbReference type="PDBsum" id="1M4J"/>
<dbReference type="PDBsum" id="2D8B"/>
<dbReference type="PDBsum" id="2HD7"/>
<dbReference type="PDBsum" id="3DAW"/>
<dbReference type="PDBsum" id="6RSW"/>
<dbReference type="PDBsum" id="6YP9"/>
<dbReference type="PDBsum" id="7DS2"/>
<dbReference type="PDBsum" id="7DS4"/>
<dbReference type="PDBsum" id="7DS6"/>
<dbReference type="PDBsum" id="7DS8"/>
<dbReference type="PDBsum" id="7DSB"/>
<dbReference type="SMR" id="Q91YR1"/>
<dbReference type="BioGRID" id="202468">
    <property type="interactions" value="12"/>
</dbReference>
<dbReference type="DIP" id="DIP-33923N"/>
<dbReference type="FunCoup" id="Q91YR1">
    <property type="interactions" value="2258"/>
</dbReference>
<dbReference type="IntAct" id="Q91YR1">
    <property type="interactions" value="6"/>
</dbReference>
<dbReference type="MINT" id="Q91YR1"/>
<dbReference type="STRING" id="10090.ENSMUSP00000023087"/>
<dbReference type="GlyGen" id="Q91YR1">
    <property type="glycosylation" value="1 site, 1 O-linked glycan (1 site)"/>
</dbReference>
<dbReference type="iPTMnet" id="Q91YR1"/>
<dbReference type="PhosphoSitePlus" id="Q91YR1"/>
<dbReference type="SwissPalm" id="Q91YR1"/>
<dbReference type="jPOST" id="Q91YR1"/>
<dbReference type="PaxDb" id="10090-ENSMUSP00000023087"/>
<dbReference type="PeptideAtlas" id="Q91YR1"/>
<dbReference type="ProteomicsDB" id="298037"/>
<dbReference type="Pumba" id="Q91YR1"/>
<dbReference type="Antibodypedia" id="13271">
    <property type="antibodies" value="376 antibodies from 31 providers"/>
</dbReference>
<dbReference type="DNASU" id="19230"/>
<dbReference type="Ensembl" id="ENSMUST00000023087.13">
    <property type="protein sequence ID" value="ENSMUSP00000023087.7"/>
    <property type="gene ID" value="ENSMUSG00000022451.13"/>
</dbReference>
<dbReference type="GeneID" id="19230"/>
<dbReference type="KEGG" id="mmu:19230"/>
<dbReference type="UCSC" id="uc007xjl.1">
    <property type="organism name" value="mouse"/>
</dbReference>
<dbReference type="AGR" id="MGI:1100520"/>
<dbReference type="CTD" id="5756"/>
<dbReference type="MGI" id="MGI:1100520">
    <property type="gene designation" value="Twf1"/>
</dbReference>
<dbReference type="VEuPathDB" id="HostDB:ENSMUSG00000022451"/>
<dbReference type="eggNOG" id="KOG1747">
    <property type="taxonomic scope" value="Eukaryota"/>
</dbReference>
<dbReference type="GeneTree" id="ENSGT00530000063868"/>
<dbReference type="HOGENOM" id="CLU_031995_1_0_1"/>
<dbReference type="InParanoid" id="Q91YR1"/>
<dbReference type="OMA" id="YLFKHTH"/>
<dbReference type="OrthoDB" id="10006997at2759"/>
<dbReference type="PhylomeDB" id="Q91YR1"/>
<dbReference type="TreeFam" id="TF352598"/>
<dbReference type="Reactome" id="R-MMU-9013418">
    <property type="pathway name" value="RHOBTB2 GTPase cycle"/>
</dbReference>
<dbReference type="BioGRID-ORCS" id="19230">
    <property type="hits" value="1 hit in 76 CRISPR screens"/>
</dbReference>
<dbReference type="CD-CODE" id="CE726F99">
    <property type="entry name" value="Postsynaptic density"/>
</dbReference>
<dbReference type="ChiTaRS" id="Twf1">
    <property type="organism name" value="mouse"/>
</dbReference>
<dbReference type="EvolutionaryTrace" id="Q91YR1"/>
<dbReference type="PRO" id="PR:Q91YR1"/>
<dbReference type="Proteomes" id="UP000000589">
    <property type="component" value="Chromosome 15"/>
</dbReference>
<dbReference type="RNAct" id="Q91YR1">
    <property type="molecule type" value="protein"/>
</dbReference>
<dbReference type="Bgee" id="ENSMUSG00000022451">
    <property type="expression patterns" value="Expressed in utricle of membranous labyrinth and 269 other cell types or tissues"/>
</dbReference>
<dbReference type="ExpressionAtlas" id="Q91YR1">
    <property type="expression patterns" value="baseline and differential"/>
</dbReference>
<dbReference type="GO" id="GO:0015629">
    <property type="term" value="C:actin cytoskeleton"/>
    <property type="evidence" value="ECO:0000314"/>
    <property type="project" value="UniProtKB"/>
</dbReference>
<dbReference type="GO" id="GO:0005911">
    <property type="term" value="C:cell-cell junction"/>
    <property type="evidence" value="ECO:0000314"/>
    <property type="project" value="BHF-UCL"/>
</dbReference>
<dbReference type="GO" id="GO:0005829">
    <property type="term" value="C:cytosol"/>
    <property type="evidence" value="ECO:0000304"/>
    <property type="project" value="Reactome"/>
</dbReference>
<dbReference type="GO" id="GO:0030175">
    <property type="term" value="C:filopodium"/>
    <property type="evidence" value="ECO:0000314"/>
    <property type="project" value="BHF-UCL"/>
</dbReference>
<dbReference type="GO" id="GO:0030016">
    <property type="term" value="C:myofibril"/>
    <property type="evidence" value="ECO:0000314"/>
    <property type="project" value="BHF-UCL"/>
</dbReference>
<dbReference type="GO" id="GO:0048471">
    <property type="term" value="C:perinuclear region of cytoplasm"/>
    <property type="evidence" value="ECO:0000314"/>
    <property type="project" value="BHF-UCL"/>
</dbReference>
<dbReference type="GO" id="GO:0003785">
    <property type="term" value="F:actin monomer binding"/>
    <property type="evidence" value="ECO:0000314"/>
    <property type="project" value="BHF-UCL"/>
</dbReference>
<dbReference type="GO" id="GO:0005524">
    <property type="term" value="F:ATP binding"/>
    <property type="evidence" value="ECO:0007669"/>
    <property type="project" value="Ensembl"/>
</dbReference>
<dbReference type="GO" id="GO:0005546">
    <property type="term" value="F:phosphatidylinositol-4,5-bisphosphate binding"/>
    <property type="evidence" value="ECO:0000314"/>
    <property type="project" value="BHF-UCL"/>
</dbReference>
<dbReference type="GO" id="GO:0004713">
    <property type="term" value="F:protein tyrosine kinase activity"/>
    <property type="evidence" value="ECO:0000314"/>
    <property type="project" value="UniProtKB"/>
</dbReference>
<dbReference type="GO" id="GO:0044877">
    <property type="term" value="F:protein-containing complex binding"/>
    <property type="evidence" value="ECO:0000353"/>
    <property type="project" value="MGI"/>
</dbReference>
<dbReference type="GO" id="GO:0051016">
    <property type="term" value="P:barbed-end actin filament capping"/>
    <property type="evidence" value="ECO:0000314"/>
    <property type="project" value="BHF-UCL"/>
</dbReference>
<dbReference type="GO" id="GO:0030837">
    <property type="term" value="P:negative regulation of actin filament polymerization"/>
    <property type="evidence" value="ECO:0000314"/>
    <property type="project" value="BHF-UCL"/>
</dbReference>
<dbReference type="GO" id="GO:0010613">
    <property type="term" value="P:positive regulation of cardiac muscle hypertrophy"/>
    <property type="evidence" value="ECO:0000314"/>
    <property type="project" value="BHF-UCL"/>
</dbReference>
<dbReference type="CDD" id="cd11284">
    <property type="entry name" value="ADF_Twf-C_like"/>
    <property type="match status" value="1"/>
</dbReference>
<dbReference type="CDD" id="cd11285">
    <property type="entry name" value="ADF_Twf-N_like"/>
    <property type="match status" value="1"/>
</dbReference>
<dbReference type="FunFam" id="3.40.20.10:FF:000007">
    <property type="entry name" value="Twinfilin-1 isoform 1"/>
    <property type="match status" value="1"/>
</dbReference>
<dbReference type="FunFam" id="3.40.20.10:FF:000012">
    <property type="entry name" value="Twinfilin-1 isoform 1"/>
    <property type="match status" value="1"/>
</dbReference>
<dbReference type="Gene3D" id="3.40.20.10">
    <property type="entry name" value="Severin"/>
    <property type="match status" value="2"/>
</dbReference>
<dbReference type="InterPro" id="IPR002108">
    <property type="entry name" value="ADF-H"/>
</dbReference>
<dbReference type="InterPro" id="IPR029006">
    <property type="entry name" value="ADF-H/Gelsolin-like_dom_sf"/>
</dbReference>
<dbReference type="InterPro" id="IPR028458">
    <property type="entry name" value="Twinfilin"/>
</dbReference>
<dbReference type="PANTHER" id="PTHR13759">
    <property type="entry name" value="TWINFILIN"/>
    <property type="match status" value="1"/>
</dbReference>
<dbReference type="PANTHER" id="PTHR13759:SF8">
    <property type="entry name" value="TWINFILIN-1"/>
    <property type="match status" value="1"/>
</dbReference>
<dbReference type="Pfam" id="PF00241">
    <property type="entry name" value="Cofilin_ADF"/>
    <property type="match status" value="2"/>
</dbReference>
<dbReference type="SMART" id="SM00102">
    <property type="entry name" value="ADF"/>
    <property type="match status" value="2"/>
</dbReference>
<dbReference type="SUPFAM" id="SSF55753">
    <property type="entry name" value="Actin depolymerizing proteins"/>
    <property type="match status" value="2"/>
</dbReference>
<dbReference type="PROSITE" id="PS51263">
    <property type="entry name" value="ADF_H"/>
    <property type="match status" value="2"/>
</dbReference>
<feature type="initiator methionine" description="Removed" evidence="1">
    <location>
        <position position="1"/>
    </location>
</feature>
<feature type="chain" id="PRO_0000214951" description="Twinfilin-1">
    <location>
        <begin position="2"/>
        <end position="350"/>
    </location>
</feature>
<feature type="domain" description="ADF-H 1" evidence="3">
    <location>
        <begin position="2"/>
        <end position="139"/>
    </location>
</feature>
<feature type="domain" description="ADF-H 2" evidence="3">
    <location>
        <begin position="175"/>
        <end position="313"/>
    </location>
</feature>
<feature type="region of interest" description="Disordered" evidence="4">
    <location>
        <begin position="317"/>
        <end position="350"/>
    </location>
</feature>
<feature type="modified residue" description="N-acetylserine" evidence="1">
    <location>
        <position position="2"/>
    </location>
</feature>
<feature type="modified residue" description="Phosphoserine" evidence="1">
    <location>
        <position position="143"/>
    </location>
</feature>
<feature type="modified residue" description="Phosphoserine" evidence="2">
    <location>
        <position position="277"/>
    </location>
</feature>
<feature type="modified residue" description="Phosphotyrosine" evidence="13 14">
    <location>
        <position position="309"/>
    </location>
</feature>
<feature type="modified residue" description="Phosphothreonine" evidence="15">
    <location>
        <position position="349"/>
    </location>
</feature>
<feature type="sequence variant" evidence="8">
    <original>Q</original>
    <variation>H</variation>
    <location>
        <position position="51"/>
    </location>
</feature>
<feature type="sequence conflict" description="In Ref. 1; AAB66592 and 2; AAP31404." evidence="11" ref="1 2">
    <original>A</original>
    <variation>R</variation>
    <location>
        <position position="345"/>
    </location>
</feature>
<feature type="helix" evidence="16">
    <location>
        <begin position="11"/>
        <end position="21"/>
    </location>
</feature>
<feature type="turn" evidence="16">
    <location>
        <begin position="22"/>
        <end position="24"/>
    </location>
</feature>
<feature type="strand" evidence="16">
    <location>
        <begin position="26"/>
        <end position="32"/>
    </location>
</feature>
<feature type="strand" evidence="16">
    <location>
        <begin position="34"/>
        <end position="43"/>
    </location>
</feature>
<feature type="helix" evidence="16">
    <location>
        <begin position="49"/>
        <end position="57"/>
    </location>
</feature>
<feature type="helix" evidence="16">
    <location>
        <begin position="58"/>
        <end position="60"/>
    </location>
</feature>
<feature type="strand" evidence="16">
    <location>
        <begin position="67"/>
        <end position="77"/>
    </location>
</feature>
<feature type="strand" evidence="16">
    <location>
        <begin position="80"/>
        <end position="88"/>
    </location>
</feature>
<feature type="helix" evidence="16">
    <location>
        <begin position="95"/>
        <end position="112"/>
    </location>
</feature>
<feature type="helix" evidence="16">
    <location>
        <begin position="114"/>
        <end position="116"/>
    </location>
</feature>
<feature type="strand" evidence="16">
    <location>
        <begin position="117"/>
        <end position="125"/>
    </location>
</feature>
<feature type="helix" evidence="16">
    <location>
        <begin position="126"/>
        <end position="129"/>
    </location>
</feature>
<feature type="helix" evidence="16">
    <location>
        <begin position="131"/>
        <end position="138"/>
    </location>
</feature>
<feature type="helix" evidence="18">
    <location>
        <begin position="184"/>
        <end position="194"/>
    </location>
</feature>
<feature type="strand" evidence="18">
    <location>
        <begin position="199"/>
        <end position="206"/>
    </location>
</feature>
<feature type="turn" evidence="18">
    <location>
        <begin position="207"/>
        <end position="210"/>
    </location>
</feature>
<feature type="strand" evidence="18">
    <location>
        <begin position="211"/>
        <end position="216"/>
    </location>
</feature>
<feature type="helix" evidence="18">
    <location>
        <begin position="222"/>
        <end position="228"/>
    </location>
</feature>
<feature type="strand" evidence="18">
    <location>
        <begin position="231"/>
        <end position="233"/>
    </location>
</feature>
<feature type="strand" evidence="18">
    <location>
        <begin position="235"/>
        <end position="245"/>
    </location>
</feature>
<feature type="strand" evidence="18">
    <location>
        <begin position="248"/>
        <end position="258"/>
    </location>
</feature>
<feature type="strand" evidence="17">
    <location>
        <begin position="262"/>
        <end position="264"/>
    </location>
</feature>
<feature type="helix" evidence="18">
    <location>
        <begin position="266"/>
        <end position="287"/>
    </location>
</feature>
<feature type="strand" evidence="18">
    <location>
        <begin position="291"/>
        <end position="298"/>
    </location>
</feature>
<feature type="helix" evidence="18">
    <location>
        <begin position="300"/>
        <end position="302"/>
    </location>
</feature>
<feature type="helix" evidence="18">
    <location>
        <begin position="305"/>
        <end position="312"/>
    </location>
</feature>
<feature type="strand" evidence="19">
    <location>
        <begin position="319"/>
        <end position="321"/>
    </location>
</feature>
<sequence length="350" mass="40079">MSHQTGIQASEDVKEIFARARNGKYRLLKISIENEQLVVGSCSPPSDSWEQDYDSFVLPLLEDKQPCYVLFRLDSQNAQGYEWIFIAWSPDHSHVRQKMLYAATRATLKKEFGGGHIKDEVFGTVKEDVSLHGYKKYLLSQSSPAPLTAAEEELRQIKINEVQTDVSVDTKHQTLQGVAFPISRDAFQALEKLSKKQLNYVQLEIDIKNETIILANTENTELRDLPKRIPKDSARYHFFLYKHSHEGDYLESVVFIYSMPGYTCSIRERMLYSSCKSPLLEIVERQLQMDVIRKIEIDNGDELTADFLYDEVHPKQHAHKQSFAKPKGPAGKRGIRRLIRGPAEAEATTD</sequence>
<name>TWF1_MOUSE</name>
<comment type="function">
    <text evidence="5 7 9 10">Actin-binding protein involved in motile and morphological processes. Inhibits actin polymerization, likely by sequestering G-actin. By capping the barbed ends of filaments, it also regulates motility. Seems to play an important role in clathrin-mediated endocytosis and distribution of endocytic organelles.</text>
</comment>
<comment type="subunit">
    <text evidence="1 5 6 7 9">Interacts with G-actin; ADP-actin form and capping protein (CP) (PubMed:12807912, PubMed:15282541, PubMed:16511569). May also be able to interact with TWF2 and phosphoinositides, PI(4,5)P2 (PubMed:12807912). When bound to PI(4,5)P2, it is down-regulated (PubMed:12807912). Interacts with ACTG1 (By similarity).</text>
</comment>
<comment type="interaction">
    <interactant intactId="EBI-527441">
        <id>Q91YR1</id>
    </interactant>
    <interactant intactId="EBI-367540">
        <id>P68135</id>
        <label>ACTA1</label>
    </interactant>
    <organismsDiffer>true</organismsDiffer>
    <experiments>2</experiments>
</comment>
<comment type="subcellular location">
    <subcellularLocation>
        <location evidence="5">Cytoplasm</location>
    </subcellularLocation>
    <subcellularLocation>
        <location evidence="5">Cytoplasm</location>
        <location evidence="5">Cytoskeleton</location>
    </subcellularLocation>
    <text>Diffuse cytoplasmic localization with perinuclear and G-actin-rich cortical actin structures sublocalization. Also found at membrane ruffles and cell-cell contacts.</text>
</comment>
<comment type="tissue specificity">
    <text evidence="5 6 10">Widely expressed with highest levels in brain, liver and kidney. Also expressed in heart, lung and testis. Not detected in spleen or skeletal muscle.</text>
</comment>
<comment type="developmental stage">
    <text evidence="6">Expression was widespread throughout the embryonic stages analyzed; 10.5 dpc, 12.5 dpc, 14.5 dpc and 18.5 dpc. At 14.5 dpc, strongest expression was observed in the developing central and peripheral nervous system (CNS and PNS, respectively) and in the olfactory sensory epithelium. In the CNS, the proliferating neuronal precursors in the ventricular zone expressed it more than the postmitotic neurons. At 18.5 dpc, highest expression levels were detected in the mechanosensory hair cells of the inner ear and in the differentiated keratinocytes of the skin.</text>
</comment>
<comment type="PTM">
    <text evidence="1">Phosphorylated on serine and threonine residues.</text>
</comment>
<comment type="similarity">
    <text evidence="11">Belongs to the actin-binding proteins ADF family. Twinfilin subfamily.</text>
</comment>
<comment type="online information" name="Protein Spotlight">
    <link uri="https://www.proteinspotlight.org/back_issues/073"/>
    <text>Molecular embrace - Issue 73 of August 2006</text>
</comment>